<name>TBAN_GUITH</name>
<sequence>MREVLSIHIGQAGIQVGNACWELYCLEHGINPDGSIIQDFNKKKNDDAFSTFFSETSTGKRVPRCVFLDLESGVIDEVKNGRYKNLYHPEQLICGNEDAANNYARGHYTIGKEIIEIALDRIRKLVENCSGLQGFLIFNSVGGGTGSGLGSLLLERLSLDYGKKSKLGFTVYPSPQVSTAVVEPYNSVLATHSLLEHTDVAVVLDNEAIYEICQRSLNIERPTYTNLNRLIAQVISSITASLRFDGALNVDITEFQTNLVPYPRIHFMLSSLAPVISLEMANHEQYSTAEITNAAFEPNSMMAKCDPRRGKYMACCLMFRGDVAPKDVNGSVAAIKTKKTIQFVDWCPTGFKCGINYQPPTVVPDGDLAKVDRAVCMISNSTAISEVFSRINKKFDLMYSKRAFVHWYVGEGMEEGEFNEAREDMAALEKDYEEVGSESQDLISNSFF</sequence>
<geneLocation type="nucleomorph"/>
<protein>
    <recommendedName>
        <fullName>Tubulin alpha chain, nucleomorph</fullName>
        <ecNumber evidence="1">3.6.5.-</ecNumber>
    </recommendedName>
    <alternativeName>
        <fullName>Nucleomorph alpha-tubulin</fullName>
    </alternativeName>
</protein>
<dbReference type="EC" id="3.6.5.-" evidence="1"/>
<dbReference type="EMBL" id="AJ010592">
    <property type="protein sequence ID" value="CAB40411.1"/>
    <property type="molecule type" value="Genomic_DNA"/>
</dbReference>
<dbReference type="EMBL" id="AF050093">
    <property type="protein sequence ID" value="AAD02572.1"/>
    <property type="molecule type" value="Genomic_DNA"/>
</dbReference>
<dbReference type="PIR" id="F90104">
    <property type="entry name" value="F90104"/>
</dbReference>
<dbReference type="RefSeq" id="XP_001713198.1">
    <property type="nucleotide sequence ID" value="XM_001713146.1"/>
</dbReference>
<dbReference type="SMR" id="Q9SCC8"/>
<dbReference type="GeneID" id="857555"/>
<dbReference type="Proteomes" id="UP000242167">
    <property type="component" value="Chromosome 2"/>
</dbReference>
<dbReference type="GO" id="GO:0005874">
    <property type="term" value="C:microtubule"/>
    <property type="evidence" value="ECO:0007669"/>
    <property type="project" value="UniProtKB-KW"/>
</dbReference>
<dbReference type="GO" id="GO:0005525">
    <property type="term" value="F:GTP binding"/>
    <property type="evidence" value="ECO:0007669"/>
    <property type="project" value="UniProtKB-KW"/>
</dbReference>
<dbReference type="GO" id="GO:0016787">
    <property type="term" value="F:hydrolase activity"/>
    <property type="evidence" value="ECO:0007669"/>
    <property type="project" value="UniProtKB-KW"/>
</dbReference>
<dbReference type="GO" id="GO:0046872">
    <property type="term" value="F:metal ion binding"/>
    <property type="evidence" value="ECO:0007669"/>
    <property type="project" value="UniProtKB-KW"/>
</dbReference>
<dbReference type="GO" id="GO:0005200">
    <property type="term" value="F:structural constituent of cytoskeleton"/>
    <property type="evidence" value="ECO:0007669"/>
    <property type="project" value="InterPro"/>
</dbReference>
<dbReference type="GO" id="GO:0007017">
    <property type="term" value="P:microtubule-based process"/>
    <property type="evidence" value="ECO:0007669"/>
    <property type="project" value="InterPro"/>
</dbReference>
<dbReference type="CDD" id="cd02186">
    <property type="entry name" value="alpha_tubulin"/>
    <property type="match status" value="1"/>
</dbReference>
<dbReference type="FunFam" id="1.10.287.600:FF:000001">
    <property type="entry name" value="Tubulin alpha chain"/>
    <property type="match status" value="1"/>
</dbReference>
<dbReference type="FunFam" id="3.30.1330.20:FF:000001">
    <property type="entry name" value="Tubulin alpha chain"/>
    <property type="match status" value="1"/>
</dbReference>
<dbReference type="FunFam" id="3.40.50.1440:FF:000004">
    <property type="entry name" value="Tubulin alpha chain"/>
    <property type="match status" value="1"/>
</dbReference>
<dbReference type="Gene3D" id="1.10.287.600">
    <property type="entry name" value="Helix hairpin bin"/>
    <property type="match status" value="1"/>
</dbReference>
<dbReference type="Gene3D" id="3.30.1330.20">
    <property type="entry name" value="Tubulin/FtsZ, C-terminal domain"/>
    <property type="match status" value="1"/>
</dbReference>
<dbReference type="Gene3D" id="3.40.50.1440">
    <property type="entry name" value="Tubulin/FtsZ, GTPase domain"/>
    <property type="match status" value="1"/>
</dbReference>
<dbReference type="InterPro" id="IPR002452">
    <property type="entry name" value="Alpha_tubulin"/>
</dbReference>
<dbReference type="InterPro" id="IPR008280">
    <property type="entry name" value="Tub_FtsZ_C"/>
</dbReference>
<dbReference type="InterPro" id="IPR000217">
    <property type="entry name" value="Tubulin"/>
</dbReference>
<dbReference type="InterPro" id="IPR037103">
    <property type="entry name" value="Tubulin/FtsZ-like_C"/>
</dbReference>
<dbReference type="InterPro" id="IPR018316">
    <property type="entry name" value="Tubulin/FtsZ_2-layer-sand-dom"/>
</dbReference>
<dbReference type="InterPro" id="IPR036525">
    <property type="entry name" value="Tubulin/FtsZ_GTPase_sf"/>
</dbReference>
<dbReference type="InterPro" id="IPR023123">
    <property type="entry name" value="Tubulin_C"/>
</dbReference>
<dbReference type="InterPro" id="IPR017975">
    <property type="entry name" value="Tubulin_CS"/>
</dbReference>
<dbReference type="InterPro" id="IPR003008">
    <property type="entry name" value="Tubulin_FtsZ_GTPase"/>
</dbReference>
<dbReference type="PANTHER" id="PTHR11588">
    <property type="entry name" value="TUBULIN"/>
    <property type="match status" value="1"/>
</dbReference>
<dbReference type="Pfam" id="PF00091">
    <property type="entry name" value="Tubulin"/>
    <property type="match status" value="1"/>
</dbReference>
<dbReference type="Pfam" id="PF03953">
    <property type="entry name" value="Tubulin_C"/>
    <property type="match status" value="1"/>
</dbReference>
<dbReference type="PRINTS" id="PR01162">
    <property type="entry name" value="ALPHATUBULIN"/>
</dbReference>
<dbReference type="PRINTS" id="PR01161">
    <property type="entry name" value="TUBULIN"/>
</dbReference>
<dbReference type="SMART" id="SM00864">
    <property type="entry name" value="Tubulin"/>
    <property type="match status" value="1"/>
</dbReference>
<dbReference type="SMART" id="SM00865">
    <property type="entry name" value="Tubulin_C"/>
    <property type="match status" value="1"/>
</dbReference>
<dbReference type="SUPFAM" id="SSF55307">
    <property type="entry name" value="Tubulin C-terminal domain-like"/>
    <property type="match status" value="1"/>
</dbReference>
<dbReference type="SUPFAM" id="SSF52490">
    <property type="entry name" value="Tubulin nucleotide-binding domain-like"/>
    <property type="match status" value="1"/>
</dbReference>
<dbReference type="PROSITE" id="PS00227">
    <property type="entry name" value="TUBULIN"/>
    <property type="match status" value="1"/>
</dbReference>
<organism>
    <name type="scientific">Guillardia theta</name>
    <name type="common">Cryptophyte</name>
    <name type="synonym">Cryptomonas phi</name>
    <dbReference type="NCBI Taxonomy" id="55529"/>
    <lineage>
        <taxon>Eukaryota</taxon>
        <taxon>Cryptophyceae</taxon>
        <taxon>Pyrenomonadales</taxon>
        <taxon>Geminigeraceae</taxon>
        <taxon>Guillardia</taxon>
    </lineage>
</organism>
<comment type="function">
    <text>Tubulin is the major constituent of microtubules, a cylinder consisting of laterally associated linear protofilaments composed of alpha- and beta-tubulin heterodimers. Microtubules grow by the addition of GTP-tubulin dimers to the microtubule end, where a stabilizing cap forms. Below the cap, tubulin dimers are in GDP-bound state, owing to GTPase activity of alpha-tubulin.</text>
</comment>
<comment type="catalytic activity">
    <reaction evidence="1">
        <text>GTP + H2O = GDP + phosphate + H(+)</text>
        <dbReference type="Rhea" id="RHEA:19669"/>
        <dbReference type="ChEBI" id="CHEBI:15377"/>
        <dbReference type="ChEBI" id="CHEBI:15378"/>
        <dbReference type="ChEBI" id="CHEBI:37565"/>
        <dbReference type="ChEBI" id="CHEBI:43474"/>
        <dbReference type="ChEBI" id="CHEBI:58189"/>
    </reaction>
    <physiologicalReaction direction="left-to-right" evidence="1">
        <dbReference type="Rhea" id="RHEA:19670"/>
    </physiologicalReaction>
</comment>
<comment type="cofactor">
    <cofactor evidence="1">
        <name>Mg(2+)</name>
        <dbReference type="ChEBI" id="CHEBI:18420"/>
    </cofactor>
</comment>
<comment type="subunit">
    <text>Dimer of alpha and beta chains. A typical microtubule is a hollow water-filled tube with an outer diameter of 25 nm and an inner diameter of 15 nM. Alpha-beta heterodimers associate head-to-tail to form protofilaments running lengthwise along the microtubule wall with the beta-tubulin subunit facing the microtubule plus end conferring a structural polarity. Microtubules usually have 13 protofilaments but different protofilament numbers can be found in some organisms and specialized cells.</text>
</comment>
<comment type="similarity">
    <text evidence="2">Belongs to the tubulin family.</text>
</comment>
<accession>Q9SCC8</accession>
<accession>Q9ZTL4</accession>
<proteinExistence type="inferred from homology"/>
<feature type="chain" id="PRO_0000233348" description="Tubulin alpha chain, nucleomorph">
    <location>
        <begin position="1"/>
        <end position="448"/>
    </location>
</feature>
<feature type="active site" evidence="1">
    <location>
        <position position="254"/>
    </location>
</feature>
<feature type="binding site" evidence="1">
    <location>
        <position position="11"/>
    </location>
    <ligand>
        <name>GTP</name>
        <dbReference type="ChEBI" id="CHEBI:37565"/>
    </ligand>
</feature>
<feature type="binding site" evidence="1">
    <location>
        <position position="71"/>
    </location>
    <ligand>
        <name>GTP</name>
        <dbReference type="ChEBI" id="CHEBI:37565"/>
    </ligand>
</feature>
<feature type="binding site" evidence="1">
    <location>
        <position position="71"/>
    </location>
    <ligand>
        <name>Mg(2+)</name>
        <dbReference type="ChEBI" id="CHEBI:18420"/>
    </ligand>
</feature>
<feature type="binding site" evidence="1">
    <location>
        <position position="140"/>
    </location>
    <ligand>
        <name>GTP</name>
        <dbReference type="ChEBI" id="CHEBI:37565"/>
    </ligand>
</feature>
<feature type="binding site" evidence="1">
    <location>
        <position position="144"/>
    </location>
    <ligand>
        <name>GTP</name>
        <dbReference type="ChEBI" id="CHEBI:37565"/>
    </ligand>
</feature>
<feature type="binding site" evidence="1">
    <location>
        <position position="145"/>
    </location>
    <ligand>
        <name>GTP</name>
        <dbReference type="ChEBI" id="CHEBI:37565"/>
    </ligand>
</feature>
<feature type="binding site" evidence="1">
    <location>
        <position position="179"/>
    </location>
    <ligand>
        <name>GTP</name>
        <dbReference type="ChEBI" id="CHEBI:37565"/>
    </ligand>
</feature>
<feature type="binding site" evidence="1">
    <location>
        <position position="206"/>
    </location>
    <ligand>
        <name>GTP</name>
        <dbReference type="ChEBI" id="CHEBI:37565"/>
    </ligand>
</feature>
<feature type="binding site" evidence="1">
    <location>
        <position position="228"/>
    </location>
    <ligand>
        <name>GTP</name>
        <dbReference type="ChEBI" id="CHEBI:37565"/>
    </ligand>
</feature>
<evidence type="ECO:0000250" key="1">
    <source>
        <dbReference type="UniProtKB" id="P68363"/>
    </source>
</evidence>
<evidence type="ECO:0000305" key="2"/>
<reference key="1">
    <citation type="journal article" date="2001" name="Nature">
        <title>The highly reduced genome of an enslaved algal nucleus.</title>
        <authorList>
            <person name="Douglas S.E."/>
            <person name="Zauner S."/>
            <person name="Fraunholz M."/>
            <person name="Beaton M."/>
            <person name="Penny S.L."/>
            <person name="Deng L.-T."/>
            <person name="Wu X."/>
            <person name="Reith M.E."/>
            <person name="Cavalier-Smith T."/>
            <person name="Maier U.-G."/>
        </authorList>
    </citation>
    <scope>NUCLEOTIDE SEQUENCE [LARGE SCALE GENOMIC DNA]</scope>
</reference>
<reference key="2">
    <citation type="journal article" date="1999" name="Mol. Biol. Evol.">
        <title>The secondary endosymbiont of the cryptomonad Guillardia theta contains alpha-, beta-, and gamma-tubulin genes.</title>
        <authorList>
            <person name="Keeling P.J."/>
            <person name="Deane J.A."/>
            <person name="Hink-Schauer C."/>
            <person name="Douglas S.E."/>
            <person name="Maier U.-G."/>
            <person name="McFadden G.I."/>
        </authorList>
    </citation>
    <scope>NUCLEOTIDE SEQUENCE [GENOMIC DNA] OF 23-412</scope>
</reference>
<gene>
    <name type="primary">tubA</name>
    <name type="synonym">atubNM</name>
</gene>
<keyword id="KW-0342">GTP-binding</keyword>
<keyword id="KW-0378">Hydrolase</keyword>
<keyword id="KW-0460">Magnesium</keyword>
<keyword id="KW-0479">Metal-binding</keyword>
<keyword id="KW-0493">Microtubule</keyword>
<keyword id="KW-0547">Nucleotide-binding</keyword>